<gene>
    <name evidence="1" type="primary">metG</name>
    <name type="ordered locus">EcSMS35_0929</name>
</gene>
<keyword id="KW-0030">Aminoacyl-tRNA synthetase</keyword>
<keyword id="KW-0067">ATP-binding</keyword>
<keyword id="KW-0963">Cytoplasm</keyword>
<keyword id="KW-0436">Ligase</keyword>
<keyword id="KW-0479">Metal-binding</keyword>
<keyword id="KW-0547">Nucleotide-binding</keyword>
<keyword id="KW-0648">Protein biosynthesis</keyword>
<keyword id="KW-0694">RNA-binding</keyword>
<keyword id="KW-0820">tRNA-binding</keyword>
<keyword id="KW-0862">Zinc</keyword>
<dbReference type="EC" id="6.1.1.10" evidence="1"/>
<dbReference type="EMBL" id="CP000970">
    <property type="protein sequence ID" value="ACB17755.1"/>
    <property type="molecule type" value="Genomic_DNA"/>
</dbReference>
<dbReference type="RefSeq" id="WP_001295427.1">
    <property type="nucleotide sequence ID" value="NC_010498.1"/>
</dbReference>
<dbReference type="SMR" id="B1LN54"/>
<dbReference type="GeneID" id="75206361"/>
<dbReference type="KEGG" id="ecm:EcSMS35_0929"/>
<dbReference type="HOGENOM" id="CLU_009710_7_0_6"/>
<dbReference type="Proteomes" id="UP000007011">
    <property type="component" value="Chromosome"/>
</dbReference>
<dbReference type="GO" id="GO:0005829">
    <property type="term" value="C:cytosol"/>
    <property type="evidence" value="ECO:0007669"/>
    <property type="project" value="TreeGrafter"/>
</dbReference>
<dbReference type="GO" id="GO:0005524">
    <property type="term" value="F:ATP binding"/>
    <property type="evidence" value="ECO:0007669"/>
    <property type="project" value="UniProtKB-UniRule"/>
</dbReference>
<dbReference type="GO" id="GO:0046872">
    <property type="term" value="F:metal ion binding"/>
    <property type="evidence" value="ECO:0007669"/>
    <property type="project" value="UniProtKB-KW"/>
</dbReference>
<dbReference type="GO" id="GO:0004825">
    <property type="term" value="F:methionine-tRNA ligase activity"/>
    <property type="evidence" value="ECO:0007669"/>
    <property type="project" value="UniProtKB-UniRule"/>
</dbReference>
<dbReference type="GO" id="GO:0000049">
    <property type="term" value="F:tRNA binding"/>
    <property type="evidence" value="ECO:0007669"/>
    <property type="project" value="UniProtKB-KW"/>
</dbReference>
<dbReference type="GO" id="GO:0006431">
    <property type="term" value="P:methionyl-tRNA aminoacylation"/>
    <property type="evidence" value="ECO:0007669"/>
    <property type="project" value="UniProtKB-UniRule"/>
</dbReference>
<dbReference type="CDD" id="cd07957">
    <property type="entry name" value="Anticodon_Ia_Met"/>
    <property type="match status" value="1"/>
</dbReference>
<dbReference type="CDD" id="cd00814">
    <property type="entry name" value="MetRS_core"/>
    <property type="match status" value="1"/>
</dbReference>
<dbReference type="CDD" id="cd02800">
    <property type="entry name" value="tRNA_bind_EcMetRS_like"/>
    <property type="match status" value="1"/>
</dbReference>
<dbReference type="FunFam" id="1.10.730.10:FF:000005">
    <property type="entry name" value="Methionine--tRNA ligase"/>
    <property type="match status" value="1"/>
</dbReference>
<dbReference type="FunFam" id="2.20.28.20:FF:000001">
    <property type="entry name" value="Methionine--tRNA ligase"/>
    <property type="match status" value="1"/>
</dbReference>
<dbReference type="FunFam" id="2.40.50.140:FF:000042">
    <property type="entry name" value="Methionine--tRNA ligase"/>
    <property type="match status" value="1"/>
</dbReference>
<dbReference type="Gene3D" id="3.40.50.620">
    <property type="entry name" value="HUPs"/>
    <property type="match status" value="1"/>
</dbReference>
<dbReference type="Gene3D" id="1.10.730.10">
    <property type="entry name" value="Isoleucyl-tRNA Synthetase, Domain 1"/>
    <property type="match status" value="1"/>
</dbReference>
<dbReference type="Gene3D" id="2.20.28.20">
    <property type="entry name" value="Methionyl-tRNA synthetase, Zn-domain"/>
    <property type="match status" value="1"/>
</dbReference>
<dbReference type="Gene3D" id="2.40.50.140">
    <property type="entry name" value="Nucleic acid-binding proteins"/>
    <property type="match status" value="1"/>
</dbReference>
<dbReference type="HAMAP" id="MF_00098">
    <property type="entry name" value="Met_tRNA_synth_type1"/>
    <property type="match status" value="1"/>
</dbReference>
<dbReference type="InterPro" id="IPR001412">
    <property type="entry name" value="aa-tRNA-synth_I_CS"/>
</dbReference>
<dbReference type="InterPro" id="IPR041872">
    <property type="entry name" value="Anticodon_Met"/>
</dbReference>
<dbReference type="InterPro" id="IPR004495">
    <property type="entry name" value="Met-tRNA-synth_bsu_C"/>
</dbReference>
<dbReference type="InterPro" id="IPR023458">
    <property type="entry name" value="Met-tRNA_ligase_1"/>
</dbReference>
<dbReference type="InterPro" id="IPR014758">
    <property type="entry name" value="Met-tRNA_synth"/>
</dbReference>
<dbReference type="InterPro" id="IPR015413">
    <property type="entry name" value="Methionyl/Leucyl_tRNA_Synth"/>
</dbReference>
<dbReference type="InterPro" id="IPR033911">
    <property type="entry name" value="MetRS_core"/>
</dbReference>
<dbReference type="InterPro" id="IPR029038">
    <property type="entry name" value="MetRS_Zn"/>
</dbReference>
<dbReference type="InterPro" id="IPR012340">
    <property type="entry name" value="NA-bd_OB-fold"/>
</dbReference>
<dbReference type="InterPro" id="IPR014729">
    <property type="entry name" value="Rossmann-like_a/b/a_fold"/>
</dbReference>
<dbReference type="InterPro" id="IPR002547">
    <property type="entry name" value="tRNA-bd_dom"/>
</dbReference>
<dbReference type="InterPro" id="IPR009080">
    <property type="entry name" value="tRNAsynth_Ia_anticodon-bd"/>
</dbReference>
<dbReference type="NCBIfam" id="TIGR00398">
    <property type="entry name" value="metG"/>
    <property type="match status" value="1"/>
</dbReference>
<dbReference type="NCBIfam" id="TIGR00399">
    <property type="entry name" value="metG_C_term"/>
    <property type="match status" value="1"/>
</dbReference>
<dbReference type="NCBIfam" id="NF001100">
    <property type="entry name" value="PRK00133.1"/>
    <property type="match status" value="1"/>
</dbReference>
<dbReference type="PANTHER" id="PTHR45765">
    <property type="entry name" value="METHIONINE--TRNA LIGASE"/>
    <property type="match status" value="1"/>
</dbReference>
<dbReference type="PANTHER" id="PTHR45765:SF1">
    <property type="entry name" value="METHIONINE--TRNA LIGASE, CYTOPLASMIC"/>
    <property type="match status" value="1"/>
</dbReference>
<dbReference type="Pfam" id="PF19303">
    <property type="entry name" value="Anticodon_3"/>
    <property type="match status" value="1"/>
</dbReference>
<dbReference type="Pfam" id="PF09334">
    <property type="entry name" value="tRNA-synt_1g"/>
    <property type="match status" value="1"/>
</dbReference>
<dbReference type="Pfam" id="PF01588">
    <property type="entry name" value="tRNA_bind"/>
    <property type="match status" value="1"/>
</dbReference>
<dbReference type="PRINTS" id="PR01041">
    <property type="entry name" value="TRNASYNTHMET"/>
</dbReference>
<dbReference type="SUPFAM" id="SSF47323">
    <property type="entry name" value="Anticodon-binding domain of a subclass of class I aminoacyl-tRNA synthetases"/>
    <property type="match status" value="1"/>
</dbReference>
<dbReference type="SUPFAM" id="SSF57770">
    <property type="entry name" value="Methionyl-tRNA synthetase (MetRS), Zn-domain"/>
    <property type="match status" value="1"/>
</dbReference>
<dbReference type="SUPFAM" id="SSF50249">
    <property type="entry name" value="Nucleic acid-binding proteins"/>
    <property type="match status" value="1"/>
</dbReference>
<dbReference type="SUPFAM" id="SSF52374">
    <property type="entry name" value="Nucleotidylyl transferase"/>
    <property type="match status" value="1"/>
</dbReference>
<dbReference type="PROSITE" id="PS00178">
    <property type="entry name" value="AA_TRNA_LIGASE_I"/>
    <property type="match status" value="1"/>
</dbReference>
<dbReference type="PROSITE" id="PS50886">
    <property type="entry name" value="TRBD"/>
    <property type="match status" value="1"/>
</dbReference>
<evidence type="ECO:0000255" key="1">
    <source>
        <dbReference type="HAMAP-Rule" id="MF_00098"/>
    </source>
</evidence>
<reference key="1">
    <citation type="journal article" date="2008" name="J. Bacteriol.">
        <title>Insights into the environmental resistance gene pool from the genome sequence of the multidrug-resistant environmental isolate Escherichia coli SMS-3-5.</title>
        <authorList>
            <person name="Fricke W.F."/>
            <person name="Wright M.S."/>
            <person name="Lindell A.H."/>
            <person name="Harkins D.M."/>
            <person name="Baker-Austin C."/>
            <person name="Ravel J."/>
            <person name="Stepanauskas R."/>
        </authorList>
    </citation>
    <scope>NUCLEOTIDE SEQUENCE [LARGE SCALE GENOMIC DNA]</scope>
    <source>
        <strain>SMS-3-5 / SECEC</strain>
    </source>
</reference>
<organism>
    <name type="scientific">Escherichia coli (strain SMS-3-5 / SECEC)</name>
    <dbReference type="NCBI Taxonomy" id="439855"/>
    <lineage>
        <taxon>Bacteria</taxon>
        <taxon>Pseudomonadati</taxon>
        <taxon>Pseudomonadota</taxon>
        <taxon>Gammaproteobacteria</taxon>
        <taxon>Enterobacterales</taxon>
        <taxon>Enterobacteriaceae</taxon>
        <taxon>Escherichia</taxon>
    </lineage>
</organism>
<proteinExistence type="inferred from homology"/>
<accession>B1LN54</accession>
<sequence length="677" mass="76241">MTQVAKKILVTCALPYANGSIHLGHMLEHIQADVWVRYQRMRGHEVNFICADDAHGTPIMLKAQQLGITPEQMIGEMSQEHQTDFAGFNISYDNYHSTHSEENRQLSELIYSRLKENGFIKNRTISQLYDPEKGMFLPDRFVKGTCPKCKSPDQYGDNCEVCGATYSPTELIEPKSVVSGATPVMRDSEHFFFDLPSFSEMLQAWTRSGALQEQVANKMQEWFESGLQQWDISRDAPYFGFEIPNAPGKYFYVWLDAPIGYMGSFKNLCDKRGDSVSFDEYWKKDSTAELYHFIGKDIVYFHSLFWPAMLEGSNFRKPTNLFVHGYVTVNGAKMSKSRGTFIKASTWLNHFDADSLRYYYTAKLSSRIDDIDLNLEDFVQRVNADIVNKVVNLASRNAGFINKRFDGVLASELADPQLYKTFTDAAEVIGEAWESREFGKAVREIMALADLANRYVDEQAPWVVAKQEGRDADLQAICSMGINLFRVLMTYLKPVLPKLTERAEAFLNTELTWDGIQQPLLGHKVNPFKALYNRIDMKQVEALVEASKEEVKAAAAPVTGPLADDPIQETITFDDFAKVDLRVALIENAEFVEGSDKLLRLTLDLGGEKRNVFSGIRSAYPDPQALIGRHTIMVANLAPRKMRFGISEGMVMAAGPGGKDIFLLSPDAGAKPGHQVK</sequence>
<protein>
    <recommendedName>
        <fullName evidence="1">Methionine--tRNA ligase</fullName>
        <ecNumber evidence="1">6.1.1.10</ecNumber>
    </recommendedName>
    <alternativeName>
        <fullName evidence="1">Methionyl-tRNA synthetase</fullName>
        <shortName evidence="1">MetRS</shortName>
    </alternativeName>
</protein>
<name>SYM_ECOSM</name>
<feature type="chain" id="PRO_1000199285" description="Methionine--tRNA ligase">
    <location>
        <begin position="1"/>
        <end position="677"/>
    </location>
</feature>
<feature type="domain" description="tRNA-binding" evidence="1">
    <location>
        <begin position="575"/>
        <end position="677"/>
    </location>
</feature>
<feature type="short sequence motif" description="'HIGH' region">
    <location>
        <begin position="15"/>
        <end position="25"/>
    </location>
</feature>
<feature type="short sequence motif" description="'KMSKS' region">
    <location>
        <begin position="333"/>
        <end position="337"/>
    </location>
</feature>
<feature type="binding site" evidence="1">
    <location>
        <position position="146"/>
    </location>
    <ligand>
        <name>Zn(2+)</name>
        <dbReference type="ChEBI" id="CHEBI:29105"/>
    </ligand>
</feature>
<feature type="binding site" evidence="1">
    <location>
        <position position="149"/>
    </location>
    <ligand>
        <name>Zn(2+)</name>
        <dbReference type="ChEBI" id="CHEBI:29105"/>
    </ligand>
</feature>
<feature type="binding site" evidence="1">
    <location>
        <position position="159"/>
    </location>
    <ligand>
        <name>Zn(2+)</name>
        <dbReference type="ChEBI" id="CHEBI:29105"/>
    </ligand>
</feature>
<feature type="binding site" evidence="1">
    <location>
        <position position="162"/>
    </location>
    <ligand>
        <name>Zn(2+)</name>
        <dbReference type="ChEBI" id="CHEBI:29105"/>
    </ligand>
</feature>
<feature type="binding site" evidence="1">
    <location>
        <position position="336"/>
    </location>
    <ligand>
        <name>ATP</name>
        <dbReference type="ChEBI" id="CHEBI:30616"/>
    </ligand>
</feature>
<comment type="function">
    <text evidence="1">Is required not only for elongation of protein synthesis but also for the initiation of all mRNA translation through initiator tRNA(fMet) aminoacylation.</text>
</comment>
<comment type="catalytic activity">
    <reaction evidence="1">
        <text>tRNA(Met) + L-methionine + ATP = L-methionyl-tRNA(Met) + AMP + diphosphate</text>
        <dbReference type="Rhea" id="RHEA:13481"/>
        <dbReference type="Rhea" id="RHEA-COMP:9667"/>
        <dbReference type="Rhea" id="RHEA-COMP:9698"/>
        <dbReference type="ChEBI" id="CHEBI:30616"/>
        <dbReference type="ChEBI" id="CHEBI:33019"/>
        <dbReference type="ChEBI" id="CHEBI:57844"/>
        <dbReference type="ChEBI" id="CHEBI:78442"/>
        <dbReference type="ChEBI" id="CHEBI:78530"/>
        <dbReference type="ChEBI" id="CHEBI:456215"/>
        <dbReference type="EC" id="6.1.1.10"/>
    </reaction>
</comment>
<comment type="cofactor">
    <cofactor evidence="1">
        <name>Zn(2+)</name>
        <dbReference type="ChEBI" id="CHEBI:29105"/>
    </cofactor>
    <text evidence="1">Binds 1 zinc ion per subunit.</text>
</comment>
<comment type="subunit">
    <text evidence="1">Homodimer.</text>
</comment>
<comment type="subcellular location">
    <subcellularLocation>
        <location evidence="1">Cytoplasm</location>
    </subcellularLocation>
</comment>
<comment type="similarity">
    <text evidence="1">Belongs to the class-I aminoacyl-tRNA synthetase family. MetG type 1 subfamily.</text>
</comment>